<organismHost>
    <name type="scientific">Galliformes</name>
    <dbReference type="NCBI Taxonomy" id="8976"/>
</organismHost>
<protein>
    <recommendedName>
        <fullName>Uncharacterized protein ORF18</fullName>
    </recommendedName>
</protein>
<name>YO18_ADEG1</name>
<dbReference type="EMBL" id="U46933">
    <property type="protein sequence ID" value="AAC54925.1"/>
    <property type="molecule type" value="Genomic_DNA"/>
</dbReference>
<dbReference type="RefSeq" id="NP_043899.1">
    <property type="nucleotide sequence ID" value="NC_001720.1"/>
</dbReference>
<dbReference type="ESTHER" id="aviad-Q64777">
    <property type="family name" value="Avian-virus_vlip"/>
</dbReference>
<dbReference type="KEGG" id="vg:1733460"/>
<dbReference type="Proteomes" id="UP000001594">
    <property type="component" value="Segment"/>
</dbReference>
<dbReference type="Gene3D" id="3.40.50.1820">
    <property type="entry name" value="alpha/beta hydrolase"/>
    <property type="match status" value="1"/>
</dbReference>
<dbReference type="InterPro" id="IPR029058">
    <property type="entry name" value="AB_hydrolase_fold"/>
</dbReference>
<reference key="1">
    <citation type="journal article" date="1996" name="J. Virol.">
        <title>The complete DNA sequence and genomic organization of the avian adenovirus CELO.</title>
        <authorList>
            <person name="Chiocca S."/>
            <person name="Kurzbauer R."/>
            <person name="Schaffner G."/>
            <person name="Baker A."/>
            <person name="Mautner V."/>
            <person name="Cotten M."/>
        </authorList>
    </citation>
    <scope>NUCLEOTIDE SEQUENCE [LARGE SCALE GENOMIC DNA]</scope>
</reference>
<accession>Q9IBM3</accession>
<keyword id="KW-1185">Reference proteome</keyword>
<organism>
    <name type="scientific">Fowl adenovirus A serotype 1 (strain CELO / Phelps)</name>
    <name type="common">FAdV-1</name>
    <name type="synonym">Avian adenovirus gal1 (strain Phelps)</name>
    <dbReference type="NCBI Taxonomy" id="10553"/>
    <lineage>
        <taxon>Viruses</taxon>
        <taxon>Varidnaviria</taxon>
        <taxon>Bamfordvirae</taxon>
        <taxon>Preplasmiviricota</taxon>
        <taxon>Tectiliviricetes</taxon>
        <taxon>Rowavirales</taxon>
        <taxon>Adenoviridae</taxon>
        <taxon>Aviadenovirus</taxon>
        <taxon>Fowl aviadenovirus A</taxon>
    </lineage>
</organism>
<gene>
    <name type="ORF">18</name>
</gene>
<feature type="chain" id="PRO_0000339007" description="Uncharacterized protein ORF18">
    <location>
        <begin position="1"/>
        <end position="202"/>
    </location>
</feature>
<proteinExistence type="predicted"/>
<sequence length="202" mass="23210">MSALSSCFNGSDSRWDPPYPKADVRRLMGTYSPDFPSWPKLIVWWNETFLTFSDGPWVVSQMRRLGVLDGKDSGELIILVQDMYPDVCPLINRARYDGTYKWTSEMMRKILRMHTIMTPESPVILLDWTNQLRDICKKVDALLWGQDVRGPAYYAVRTTAHFFTEFKDHRIHCIGMSLGGTVCAALSRQLLVRTEGQKRLAA</sequence>